<sequence length="215" mass="23558">MRDELVWIDCEMTGLDLRSDLLIEIAVLVTDADLNILGDGLDVVIHAPDEALDAMIPVVTEMHTRSGLIEEVRASTVDLATAEEMVLDYIRGHVKQAKTAPLAGNSIATDRGFIARDMAKLDDYLHYRMIDVSSIKELCRRWYPRIYFGQPEKGLAHRALADIHESIRELKYYRQTAFVAPPGPSTSDIAAIAAELGPPGKDAADTDSAAGHTTG</sequence>
<evidence type="ECO:0000255" key="1">
    <source>
        <dbReference type="HAMAP-Rule" id="MF_00045"/>
    </source>
</evidence>
<evidence type="ECO:0000256" key="2">
    <source>
        <dbReference type="SAM" id="MobiDB-lite"/>
    </source>
</evidence>
<gene>
    <name evidence="1" type="primary">orn</name>
    <name type="ordered locus">Mmcs_3640</name>
</gene>
<dbReference type="EC" id="3.1.15.-" evidence="1"/>
<dbReference type="EMBL" id="CP000384">
    <property type="protein sequence ID" value="ABG09747.1"/>
    <property type="molecule type" value="Genomic_DNA"/>
</dbReference>
<dbReference type="SMR" id="Q1B5T7"/>
<dbReference type="KEGG" id="mmc:Mmcs_3640"/>
<dbReference type="HOGENOM" id="CLU_064761_3_0_11"/>
<dbReference type="BioCyc" id="MSP164756:G1G6O-3714-MONOMER"/>
<dbReference type="GO" id="GO:0005737">
    <property type="term" value="C:cytoplasm"/>
    <property type="evidence" value="ECO:0007669"/>
    <property type="project" value="UniProtKB-SubCell"/>
</dbReference>
<dbReference type="GO" id="GO:0000175">
    <property type="term" value="F:3'-5'-RNA exonuclease activity"/>
    <property type="evidence" value="ECO:0007669"/>
    <property type="project" value="InterPro"/>
</dbReference>
<dbReference type="GO" id="GO:0003676">
    <property type="term" value="F:nucleic acid binding"/>
    <property type="evidence" value="ECO:0007669"/>
    <property type="project" value="InterPro"/>
</dbReference>
<dbReference type="CDD" id="cd06135">
    <property type="entry name" value="Orn"/>
    <property type="match status" value="1"/>
</dbReference>
<dbReference type="FunFam" id="3.30.420.10:FF:000003">
    <property type="entry name" value="Oligoribonuclease"/>
    <property type="match status" value="1"/>
</dbReference>
<dbReference type="Gene3D" id="3.30.420.10">
    <property type="entry name" value="Ribonuclease H-like superfamily/Ribonuclease H"/>
    <property type="match status" value="1"/>
</dbReference>
<dbReference type="HAMAP" id="MF_00045">
    <property type="entry name" value="Oligoribonuclease"/>
    <property type="match status" value="1"/>
</dbReference>
<dbReference type="InterPro" id="IPR013520">
    <property type="entry name" value="Exonuclease_RNaseT/DNA_pol3"/>
</dbReference>
<dbReference type="InterPro" id="IPR022894">
    <property type="entry name" value="Oligoribonuclease"/>
</dbReference>
<dbReference type="InterPro" id="IPR012337">
    <property type="entry name" value="RNaseH-like_sf"/>
</dbReference>
<dbReference type="InterPro" id="IPR036397">
    <property type="entry name" value="RNaseH_sf"/>
</dbReference>
<dbReference type="NCBIfam" id="NF003765">
    <property type="entry name" value="PRK05359.1"/>
    <property type="match status" value="1"/>
</dbReference>
<dbReference type="PANTHER" id="PTHR11046">
    <property type="entry name" value="OLIGORIBONUCLEASE, MITOCHONDRIAL"/>
    <property type="match status" value="1"/>
</dbReference>
<dbReference type="PANTHER" id="PTHR11046:SF0">
    <property type="entry name" value="OLIGORIBONUCLEASE, MITOCHONDRIAL"/>
    <property type="match status" value="1"/>
</dbReference>
<dbReference type="Pfam" id="PF00929">
    <property type="entry name" value="RNase_T"/>
    <property type="match status" value="1"/>
</dbReference>
<dbReference type="SMART" id="SM00479">
    <property type="entry name" value="EXOIII"/>
    <property type="match status" value="1"/>
</dbReference>
<dbReference type="SUPFAM" id="SSF53098">
    <property type="entry name" value="Ribonuclease H-like"/>
    <property type="match status" value="1"/>
</dbReference>
<feature type="chain" id="PRO_1000004264" description="Oligoribonuclease">
    <location>
        <begin position="1"/>
        <end position="215"/>
    </location>
</feature>
<feature type="domain" description="Exonuclease" evidence="1">
    <location>
        <begin position="5"/>
        <end position="170"/>
    </location>
</feature>
<feature type="region of interest" description="Disordered" evidence="2">
    <location>
        <begin position="196"/>
        <end position="215"/>
    </location>
</feature>
<feature type="active site" evidence="1">
    <location>
        <position position="127"/>
    </location>
</feature>
<protein>
    <recommendedName>
        <fullName evidence="1">Oligoribonuclease</fullName>
        <ecNumber evidence="1">3.1.15.-</ecNumber>
    </recommendedName>
</protein>
<organism>
    <name type="scientific">Mycobacterium sp. (strain MCS)</name>
    <dbReference type="NCBI Taxonomy" id="164756"/>
    <lineage>
        <taxon>Bacteria</taxon>
        <taxon>Bacillati</taxon>
        <taxon>Actinomycetota</taxon>
        <taxon>Actinomycetes</taxon>
        <taxon>Mycobacteriales</taxon>
        <taxon>Mycobacteriaceae</taxon>
        <taxon>Mycobacterium</taxon>
    </lineage>
</organism>
<name>ORN_MYCSS</name>
<reference key="1">
    <citation type="submission" date="2006-06" db="EMBL/GenBank/DDBJ databases">
        <title>Complete sequence of chromosome of Mycobacterium sp. MCS.</title>
        <authorList>
            <consortium name="US DOE Joint Genome Institute"/>
            <person name="Copeland A."/>
            <person name="Lucas S."/>
            <person name="Lapidus A."/>
            <person name="Barry K."/>
            <person name="Detter J.C."/>
            <person name="Glavina del Rio T."/>
            <person name="Hammon N."/>
            <person name="Israni S."/>
            <person name="Dalin E."/>
            <person name="Tice H."/>
            <person name="Pitluck S."/>
            <person name="Martinez M."/>
            <person name="Schmutz J."/>
            <person name="Larimer F."/>
            <person name="Land M."/>
            <person name="Hauser L."/>
            <person name="Kyrpides N."/>
            <person name="Kim E."/>
            <person name="Miller C.D."/>
            <person name="Hughes J.E."/>
            <person name="Anderson A.J."/>
            <person name="Sims R.C."/>
            <person name="Richardson P."/>
        </authorList>
    </citation>
    <scope>NUCLEOTIDE SEQUENCE [LARGE SCALE GENOMIC DNA]</scope>
    <source>
        <strain>MCS</strain>
    </source>
</reference>
<accession>Q1B5T7</accession>
<proteinExistence type="inferred from homology"/>
<keyword id="KW-0963">Cytoplasm</keyword>
<keyword id="KW-0269">Exonuclease</keyword>
<keyword id="KW-0378">Hydrolase</keyword>
<keyword id="KW-0540">Nuclease</keyword>
<comment type="function">
    <text evidence="1">3'-to-5' exoribonuclease specific for small oligoribonucleotides.</text>
</comment>
<comment type="subcellular location">
    <subcellularLocation>
        <location evidence="1">Cytoplasm</location>
    </subcellularLocation>
</comment>
<comment type="similarity">
    <text evidence="1">Belongs to the oligoribonuclease family.</text>
</comment>